<proteinExistence type="inferred from homology"/>
<protein>
    <recommendedName>
        <fullName evidence="1">Pyridoxal kinase PdxY</fullName>
        <shortName evidence="1">PL kinase</shortName>
        <ecNumber evidence="1">2.7.1.35</ecNumber>
    </recommendedName>
</protein>
<organism>
    <name type="scientific">Pseudomonas putida (strain ATCC 700007 / DSM 6899 / JCM 31910 / BCRC 17059 / LMG 24140 / F1)</name>
    <dbReference type="NCBI Taxonomy" id="351746"/>
    <lineage>
        <taxon>Bacteria</taxon>
        <taxon>Pseudomonadati</taxon>
        <taxon>Pseudomonadota</taxon>
        <taxon>Gammaproteobacteria</taxon>
        <taxon>Pseudomonadales</taxon>
        <taxon>Pseudomonadaceae</taxon>
        <taxon>Pseudomonas</taxon>
    </lineage>
</organism>
<feature type="chain" id="PRO_1000069889" description="Pyridoxal kinase PdxY">
    <location>
        <begin position="1"/>
        <end position="290"/>
    </location>
</feature>
<feature type="binding site" evidence="1">
    <location>
        <position position="12"/>
    </location>
    <ligand>
        <name>substrate</name>
    </ligand>
</feature>
<feature type="binding site" evidence="1">
    <location>
        <begin position="47"/>
        <end position="48"/>
    </location>
    <ligand>
        <name>substrate</name>
    </ligand>
</feature>
<feature type="binding site" evidence="1">
    <location>
        <position position="114"/>
    </location>
    <ligand>
        <name>ATP</name>
        <dbReference type="ChEBI" id="CHEBI:30616"/>
    </ligand>
</feature>
<feature type="binding site" evidence="1">
    <location>
        <position position="151"/>
    </location>
    <ligand>
        <name>ATP</name>
        <dbReference type="ChEBI" id="CHEBI:30616"/>
    </ligand>
</feature>
<feature type="binding site" evidence="1">
    <location>
        <position position="184"/>
    </location>
    <ligand>
        <name>ATP</name>
        <dbReference type="ChEBI" id="CHEBI:30616"/>
    </ligand>
</feature>
<feature type="binding site" evidence="1">
    <location>
        <begin position="211"/>
        <end position="214"/>
    </location>
    <ligand>
        <name>ATP</name>
        <dbReference type="ChEBI" id="CHEBI:30616"/>
    </ligand>
</feature>
<feature type="binding site" evidence="1">
    <location>
        <position position="225"/>
    </location>
    <ligand>
        <name>substrate</name>
    </ligand>
</feature>
<reference key="1">
    <citation type="submission" date="2007-05" db="EMBL/GenBank/DDBJ databases">
        <title>Complete sequence of Pseudomonas putida F1.</title>
        <authorList>
            <consortium name="US DOE Joint Genome Institute"/>
            <person name="Copeland A."/>
            <person name="Lucas S."/>
            <person name="Lapidus A."/>
            <person name="Barry K."/>
            <person name="Detter J.C."/>
            <person name="Glavina del Rio T."/>
            <person name="Hammon N."/>
            <person name="Israni S."/>
            <person name="Dalin E."/>
            <person name="Tice H."/>
            <person name="Pitluck S."/>
            <person name="Chain P."/>
            <person name="Malfatti S."/>
            <person name="Shin M."/>
            <person name="Vergez L."/>
            <person name="Schmutz J."/>
            <person name="Larimer F."/>
            <person name="Land M."/>
            <person name="Hauser L."/>
            <person name="Kyrpides N."/>
            <person name="Lykidis A."/>
            <person name="Parales R."/>
            <person name="Richardson P."/>
        </authorList>
    </citation>
    <scope>NUCLEOTIDE SEQUENCE [LARGE SCALE GENOMIC DNA]</scope>
    <source>
        <strain>ATCC 700007 / DSM 6899 / JCM 31910 / BCRC 17059 / LMG 24140 / F1</strain>
    </source>
</reference>
<gene>
    <name evidence="1" type="primary">pdxY</name>
    <name type="ordered locus">Pput_5265</name>
</gene>
<sequence>MKRTPHLLAIQSHVVFGHAGNSAAVFPMQRIGVNAWPLNTVQFSNHTQYGQWAGEVLAPAQIPALVEGISNIGELGHCDAVLSGYLGSAEQGRAILAGVERIKAVNPKALYLCDPVMGHPEKGCIVPPEVSEFLLDEAAATADILCPNQLELDSFCGRRAQSLEDCVNMARSLLQRGPQVVLVKHLAYPGRAEEQFEMLLVTAEHSWHLRRPLLAFPRQPVGVGDLTSGLFLARVLLGDSWVQAFEFTAAAVHEVLLETQACASYELQLVRAQDRIAHPRVRFEAQLLAL</sequence>
<keyword id="KW-0067">ATP-binding</keyword>
<keyword id="KW-0418">Kinase</keyword>
<keyword id="KW-0460">Magnesium</keyword>
<keyword id="KW-0547">Nucleotide-binding</keyword>
<keyword id="KW-0808">Transferase</keyword>
<dbReference type="EC" id="2.7.1.35" evidence="1"/>
<dbReference type="EMBL" id="CP000712">
    <property type="protein sequence ID" value="ABQ81383.1"/>
    <property type="molecule type" value="Genomic_DNA"/>
</dbReference>
<dbReference type="SMR" id="A5WB73"/>
<dbReference type="KEGG" id="ppf:Pput_5265"/>
<dbReference type="eggNOG" id="COG2240">
    <property type="taxonomic scope" value="Bacteria"/>
</dbReference>
<dbReference type="HOGENOM" id="CLU_046496_3_0_6"/>
<dbReference type="UniPathway" id="UPA01068">
    <property type="reaction ID" value="UER00298"/>
</dbReference>
<dbReference type="GO" id="GO:0005829">
    <property type="term" value="C:cytosol"/>
    <property type="evidence" value="ECO:0007669"/>
    <property type="project" value="TreeGrafter"/>
</dbReference>
<dbReference type="GO" id="GO:0005524">
    <property type="term" value="F:ATP binding"/>
    <property type="evidence" value="ECO:0007669"/>
    <property type="project" value="UniProtKB-UniRule"/>
</dbReference>
<dbReference type="GO" id="GO:0000287">
    <property type="term" value="F:magnesium ion binding"/>
    <property type="evidence" value="ECO:0007669"/>
    <property type="project" value="UniProtKB-UniRule"/>
</dbReference>
<dbReference type="GO" id="GO:0008478">
    <property type="term" value="F:pyridoxal kinase activity"/>
    <property type="evidence" value="ECO:0007669"/>
    <property type="project" value="UniProtKB-UniRule"/>
</dbReference>
<dbReference type="GO" id="GO:0009443">
    <property type="term" value="P:pyridoxal 5'-phosphate salvage"/>
    <property type="evidence" value="ECO:0007669"/>
    <property type="project" value="UniProtKB-UniRule"/>
</dbReference>
<dbReference type="CDD" id="cd01173">
    <property type="entry name" value="pyridoxal_pyridoxamine_kinase"/>
    <property type="match status" value="1"/>
</dbReference>
<dbReference type="FunFam" id="3.40.1190.20:FF:000008">
    <property type="entry name" value="Pyridoxal kinase PdxY"/>
    <property type="match status" value="1"/>
</dbReference>
<dbReference type="Gene3D" id="3.40.1190.20">
    <property type="match status" value="1"/>
</dbReference>
<dbReference type="HAMAP" id="MF_01639">
    <property type="entry name" value="PdxY"/>
    <property type="match status" value="1"/>
</dbReference>
<dbReference type="InterPro" id="IPR013749">
    <property type="entry name" value="PM/HMP-P_kinase-1"/>
</dbReference>
<dbReference type="InterPro" id="IPR004625">
    <property type="entry name" value="PyrdxlKinase"/>
</dbReference>
<dbReference type="InterPro" id="IPR023685">
    <property type="entry name" value="Pyridoxal_kinase_PdxY"/>
</dbReference>
<dbReference type="InterPro" id="IPR029056">
    <property type="entry name" value="Ribokinase-like"/>
</dbReference>
<dbReference type="NCBIfam" id="NF004398">
    <property type="entry name" value="PRK05756.1"/>
    <property type="match status" value="1"/>
</dbReference>
<dbReference type="NCBIfam" id="TIGR00687">
    <property type="entry name" value="pyridox_kin"/>
    <property type="match status" value="1"/>
</dbReference>
<dbReference type="PANTHER" id="PTHR10534">
    <property type="entry name" value="PYRIDOXAL KINASE"/>
    <property type="match status" value="1"/>
</dbReference>
<dbReference type="PANTHER" id="PTHR10534:SF2">
    <property type="entry name" value="PYRIDOXAL KINASE"/>
    <property type="match status" value="1"/>
</dbReference>
<dbReference type="Pfam" id="PF08543">
    <property type="entry name" value="Phos_pyr_kin"/>
    <property type="match status" value="1"/>
</dbReference>
<dbReference type="SUPFAM" id="SSF53613">
    <property type="entry name" value="Ribokinase-like"/>
    <property type="match status" value="1"/>
</dbReference>
<comment type="function">
    <text evidence="1">Pyridoxal kinase involved in the salvage pathway of pyridoxal 5'-phosphate (PLP). Catalyzes the phosphorylation of pyridoxal to PLP.</text>
</comment>
<comment type="catalytic activity">
    <reaction evidence="1">
        <text>pyridoxal + ATP = pyridoxal 5'-phosphate + ADP + H(+)</text>
        <dbReference type="Rhea" id="RHEA:10224"/>
        <dbReference type="ChEBI" id="CHEBI:15378"/>
        <dbReference type="ChEBI" id="CHEBI:17310"/>
        <dbReference type="ChEBI" id="CHEBI:30616"/>
        <dbReference type="ChEBI" id="CHEBI:456216"/>
        <dbReference type="ChEBI" id="CHEBI:597326"/>
        <dbReference type="EC" id="2.7.1.35"/>
    </reaction>
</comment>
<comment type="cofactor">
    <cofactor evidence="1">
        <name>Mg(2+)</name>
        <dbReference type="ChEBI" id="CHEBI:18420"/>
    </cofactor>
</comment>
<comment type="pathway">
    <text evidence="1">Cofactor metabolism; pyridoxal 5'-phosphate salvage; pyridoxal 5'-phosphate from pyridoxal: step 1/1.</text>
</comment>
<comment type="subunit">
    <text evidence="1">Homodimer.</text>
</comment>
<comment type="similarity">
    <text evidence="1">Belongs to the pyridoxine kinase family. PdxY subfamily.</text>
</comment>
<name>PDXY_PSEP1</name>
<evidence type="ECO:0000255" key="1">
    <source>
        <dbReference type="HAMAP-Rule" id="MF_01639"/>
    </source>
</evidence>
<accession>A5WB73</accession>